<keyword id="KW-0067">ATP-binding</keyword>
<keyword id="KW-0227">DNA damage</keyword>
<keyword id="KW-0234">DNA repair</keyword>
<keyword id="KW-0238">DNA-binding</keyword>
<keyword id="KW-0547">Nucleotide-binding</keyword>
<keyword id="KW-1185">Reference proteome</keyword>
<feature type="chain" id="PRO_0000335225" description="DNA mismatch repair protein MutS">
    <location>
        <begin position="1"/>
        <end position="879"/>
    </location>
</feature>
<feature type="binding site" evidence="1">
    <location>
        <begin position="629"/>
        <end position="636"/>
    </location>
    <ligand>
        <name>ATP</name>
        <dbReference type="ChEBI" id="CHEBI:30616"/>
    </ligand>
</feature>
<dbReference type="EMBL" id="CP000377">
    <property type="protein sequence ID" value="ABF65607.1"/>
    <property type="molecule type" value="Genomic_DNA"/>
</dbReference>
<dbReference type="RefSeq" id="WP_011540188.1">
    <property type="nucleotide sequence ID" value="NC_008044.1"/>
</dbReference>
<dbReference type="SMR" id="Q1GCK9"/>
<dbReference type="STRING" id="292414.TM1040_2875"/>
<dbReference type="KEGG" id="sit:TM1040_2875"/>
<dbReference type="eggNOG" id="COG0249">
    <property type="taxonomic scope" value="Bacteria"/>
</dbReference>
<dbReference type="HOGENOM" id="CLU_002472_4_0_5"/>
<dbReference type="OrthoDB" id="9802448at2"/>
<dbReference type="Proteomes" id="UP000000636">
    <property type="component" value="Chromosome"/>
</dbReference>
<dbReference type="GO" id="GO:0005829">
    <property type="term" value="C:cytosol"/>
    <property type="evidence" value="ECO:0007669"/>
    <property type="project" value="TreeGrafter"/>
</dbReference>
<dbReference type="GO" id="GO:0005524">
    <property type="term" value="F:ATP binding"/>
    <property type="evidence" value="ECO:0007669"/>
    <property type="project" value="UniProtKB-UniRule"/>
</dbReference>
<dbReference type="GO" id="GO:0140664">
    <property type="term" value="F:ATP-dependent DNA damage sensor activity"/>
    <property type="evidence" value="ECO:0007669"/>
    <property type="project" value="InterPro"/>
</dbReference>
<dbReference type="GO" id="GO:0003684">
    <property type="term" value="F:damaged DNA binding"/>
    <property type="evidence" value="ECO:0007669"/>
    <property type="project" value="UniProtKB-UniRule"/>
</dbReference>
<dbReference type="GO" id="GO:0030983">
    <property type="term" value="F:mismatched DNA binding"/>
    <property type="evidence" value="ECO:0007669"/>
    <property type="project" value="InterPro"/>
</dbReference>
<dbReference type="GO" id="GO:0006298">
    <property type="term" value="P:mismatch repair"/>
    <property type="evidence" value="ECO:0007669"/>
    <property type="project" value="UniProtKB-UniRule"/>
</dbReference>
<dbReference type="CDD" id="cd03284">
    <property type="entry name" value="ABC_MutS1"/>
    <property type="match status" value="1"/>
</dbReference>
<dbReference type="FunFam" id="3.40.1170.10:FF:000001">
    <property type="entry name" value="DNA mismatch repair protein MutS"/>
    <property type="match status" value="1"/>
</dbReference>
<dbReference type="Gene3D" id="1.10.1420.10">
    <property type="match status" value="2"/>
</dbReference>
<dbReference type="Gene3D" id="6.10.140.430">
    <property type="match status" value="1"/>
</dbReference>
<dbReference type="Gene3D" id="3.40.1170.10">
    <property type="entry name" value="DNA repair protein MutS, domain I"/>
    <property type="match status" value="1"/>
</dbReference>
<dbReference type="Gene3D" id="3.30.420.110">
    <property type="entry name" value="MutS, connector domain"/>
    <property type="match status" value="1"/>
</dbReference>
<dbReference type="Gene3D" id="3.40.50.300">
    <property type="entry name" value="P-loop containing nucleotide triphosphate hydrolases"/>
    <property type="match status" value="1"/>
</dbReference>
<dbReference type="HAMAP" id="MF_00096">
    <property type="entry name" value="MutS"/>
    <property type="match status" value="1"/>
</dbReference>
<dbReference type="InterPro" id="IPR005748">
    <property type="entry name" value="DNA_mismatch_repair_MutS"/>
</dbReference>
<dbReference type="InterPro" id="IPR007695">
    <property type="entry name" value="DNA_mismatch_repair_MutS-lik_N"/>
</dbReference>
<dbReference type="InterPro" id="IPR017261">
    <property type="entry name" value="DNA_mismatch_repair_MutS/MSH"/>
</dbReference>
<dbReference type="InterPro" id="IPR000432">
    <property type="entry name" value="DNA_mismatch_repair_MutS_C"/>
</dbReference>
<dbReference type="InterPro" id="IPR007861">
    <property type="entry name" value="DNA_mismatch_repair_MutS_clamp"/>
</dbReference>
<dbReference type="InterPro" id="IPR007696">
    <property type="entry name" value="DNA_mismatch_repair_MutS_core"/>
</dbReference>
<dbReference type="InterPro" id="IPR016151">
    <property type="entry name" value="DNA_mismatch_repair_MutS_N"/>
</dbReference>
<dbReference type="InterPro" id="IPR036187">
    <property type="entry name" value="DNA_mismatch_repair_MutS_sf"/>
</dbReference>
<dbReference type="InterPro" id="IPR007860">
    <property type="entry name" value="DNA_mmatch_repair_MutS_con_dom"/>
</dbReference>
<dbReference type="InterPro" id="IPR045076">
    <property type="entry name" value="MutS"/>
</dbReference>
<dbReference type="InterPro" id="IPR036678">
    <property type="entry name" value="MutS_con_dom_sf"/>
</dbReference>
<dbReference type="InterPro" id="IPR027417">
    <property type="entry name" value="P-loop_NTPase"/>
</dbReference>
<dbReference type="NCBIfam" id="TIGR01070">
    <property type="entry name" value="mutS1"/>
    <property type="match status" value="1"/>
</dbReference>
<dbReference type="NCBIfam" id="NF003810">
    <property type="entry name" value="PRK05399.1"/>
    <property type="match status" value="1"/>
</dbReference>
<dbReference type="PANTHER" id="PTHR11361:SF34">
    <property type="entry name" value="DNA MISMATCH REPAIR PROTEIN MSH1, MITOCHONDRIAL"/>
    <property type="match status" value="1"/>
</dbReference>
<dbReference type="PANTHER" id="PTHR11361">
    <property type="entry name" value="DNA MISMATCH REPAIR PROTEIN MUTS FAMILY MEMBER"/>
    <property type="match status" value="1"/>
</dbReference>
<dbReference type="Pfam" id="PF01624">
    <property type="entry name" value="MutS_I"/>
    <property type="match status" value="1"/>
</dbReference>
<dbReference type="Pfam" id="PF05188">
    <property type="entry name" value="MutS_II"/>
    <property type="match status" value="1"/>
</dbReference>
<dbReference type="Pfam" id="PF05192">
    <property type="entry name" value="MutS_III"/>
    <property type="match status" value="1"/>
</dbReference>
<dbReference type="Pfam" id="PF05190">
    <property type="entry name" value="MutS_IV"/>
    <property type="match status" value="1"/>
</dbReference>
<dbReference type="Pfam" id="PF00488">
    <property type="entry name" value="MutS_V"/>
    <property type="match status" value="1"/>
</dbReference>
<dbReference type="PIRSF" id="PIRSF037677">
    <property type="entry name" value="DNA_mis_repair_Msh6"/>
    <property type="match status" value="1"/>
</dbReference>
<dbReference type="SMART" id="SM00534">
    <property type="entry name" value="MUTSac"/>
    <property type="match status" value="1"/>
</dbReference>
<dbReference type="SMART" id="SM00533">
    <property type="entry name" value="MUTSd"/>
    <property type="match status" value="1"/>
</dbReference>
<dbReference type="SUPFAM" id="SSF55271">
    <property type="entry name" value="DNA repair protein MutS, domain I"/>
    <property type="match status" value="1"/>
</dbReference>
<dbReference type="SUPFAM" id="SSF53150">
    <property type="entry name" value="DNA repair protein MutS, domain II"/>
    <property type="match status" value="1"/>
</dbReference>
<dbReference type="SUPFAM" id="SSF48334">
    <property type="entry name" value="DNA repair protein MutS, domain III"/>
    <property type="match status" value="1"/>
</dbReference>
<dbReference type="SUPFAM" id="SSF52540">
    <property type="entry name" value="P-loop containing nucleoside triphosphate hydrolases"/>
    <property type="match status" value="1"/>
</dbReference>
<dbReference type="PROSITE" id="PS00486">
    <property type="entry name" value="DNA_MISMATCH_REPAIR_2"/>
    <property type="match status" value="1"/>
</dbReference>
<accession>Q1GCK9</accession>
<protein>
    <recommendedName>
        <fullName evidence="1">DNA mismatch repair protein MutS</fullName>
    </recommendedName>
</protein>
<name>MUTS_RUEST</name>
<gene>
    <name evidence="1" type="primary">mutS</name>
    <name type="ordered locus">TM1040_2875</name>
</gene>
<evidence type="ECO:0000255" key="1">
    <source>
        <dbReference type="HAMAP-Rule" id="MF_00096"/>
    </source>
</evidence>
<sequence length="879" mass="95738">MSVTPMMAQYLEIKAQYPDALLFYRMGDFYEMFFEDAVNAAEALDIALTKRGKHEGEDIPMCGVPVHAAEGYLLTLIRKGFRVAVGEQLESPAEAKKRGSKSVVKRDVVRLVTPGTLTEDSLLEARRHNFLVAYSELRDQAALAWADISTGAFHVMPVARVRLSPELARLAPSELIVADGPIFDATLPLAEEYKIPLTPLGKASFDSTAAEKRLCHLFNVSALDGFGTFNRAEISAMGAVVDYLEITQKGKLPLLQPPLQESEDRTVQIDASTRRNLELTRSLSGGRAGSLLSVVDRTVTPGGARLLEQRLSSPSRNLDVISARLEALDTIVEDPIRCDTLRGLLRKTPDIDRALSRLALDRGGPRDLAAIRNALSQGEDIERALQDPDLPTLLRDAAHSLEGFQDLLSLLDAALIAEPPLLARDGGFIAAGYDRELDEARTLRDEGRSVIAGLQKKYAEHTGISSLKIKHNNVLGYFIETTSTHAAKMQSAPMSDTYIHRQTTANQVRFTTVELSEIETKILNAGNLALEIEKRLYQRLSGAILDSAARLNQAARGFAEIDLVTALADLARAENWTRPRVDTSRAFHVDGGRHPVVEQALRHQGGDSFVANDCDLSPQDGAAIWLLTGPNMAGKSTFLRQNALIAVLAQMGSYVPAEAAHIGMISQLFSRVGASDDLARGRSTFMVEMVETAAILNQADDRALVILDEIGRGTATYDGLSIAWATLEHLHEVNRSRALFATHYHELTQLATKLTGVENATVSVKEWEGEVIFLHEVKKGAADRSYGVQVAQLAGLPASVVARARSVLDMLEKSSREGGGAGKVQIDDLPLFAAAPAPQPKPAQGPSPVEKLLEEIFPDDLTPREALETLYRLKDVSKG</sequence>
<comment type="function">
    <text evidence="1">This protein is involved in the repair of mismatches in DNA. It is possible that it carries out the mismatch recognition step. This protein has a weak ATPase activity.</text>
</comment>
<comment type="similarity">
    <text evidence="1">Belongs to the DNA mismatch repair MutS family.</text>
</comment>
<organism>
    <name type="scientific">Ruegeria sp. (strain TM1040)</name>
    <name type="common">Silicibacter sp.</name>
    <dbReference type="NCBI Taxonomy" id="292414"/>
    <lineage>
        <taxon>Bacteria</taxon>
        <taxon>Pseudomonadati</taxon>
        <taxon>Pseudomonadota</taxon>
        <taxon>Alphaproteobacteria</taxon>
        <taxon>Rhodobacterales</taxon>
        <taxon>Roseobacteraceae</taxon>
        <taxon>Ruegeria</taxon>
    </lineage>
</organism>
<reference key="1">
    <citation type="submission" date="2006-05" db="EMBL/GenBank/DDBJ databases">
        <title>Complete sequence of chromosome of Silicibacter sp. TM1040.</title>
        <authorList>
            <consortium name="US DOE Joint Genome Institute"/>
            <person name="Copeland A."/>
            <person name="Lucas S."/>
            <person name="Lapidus A."/>
            <person name="Barry K."/>
            <person name="Detter J.C."/>
            <person name="Glavina del Rio T."/>
            <person name="Hammon N."/>
            <person name="Israni S."/>
            <person name="Dalin E."/>
            <person name="Tice H."/>
            <person name="Pitluck S."/>
            <person name="Brettin T."/>
            <person name="Bruce D."/>
            <person name="Han C."/>
            <person name="Tapia R."/>
            <person name="Goodwin L."/>
            <person name="Thompson L.S."/>
            <person name="Gilna P."/>
            <person name="Schmutz J."/>
            <person name="Larimer F."/>
            <person name="Land M."/>
            <person name="Hauser L."/>
            <person name="Kyrpides N."/>
            <person name="Kim E."/>
            <person name="Belas R."/>
            <person name="Moran M.A."/>
            <person name="Buchan A."/>
            <person name="Gonzalez J.M."/>
            <person name="Schell M.A."/>
            <person name="Sun F."/>
            <person name="Richardson P."/>
        </authorList>
    </citation>
    <scope>NUCLEOTIDE SEQUENCE [LARGE SCALE GENOMIC DNA]</scope>
    <source>
        <strain>TM1040</strain>
    </source>
</reference>
<proteinExistence type="inferred from homology"/>